<protein>
    <recommendedName>
        <fullName evidence="2">NRPS-independent siderophore synthetase-like protein ankE</fullName>
        <ecNumber evidence="1">6.-.-.-</ecNumber>
    </recommendedName>
    <alternativeName>
        <fullName evidence="2">Ank biosynthesis cluster protein E</fullName>
    </alternativeName>
</protein>
<accession>A0A397HK89</accession>
<name>ANKE_ASPTH</name>
<sequence>MTVPPISERASFEVAKRLLCQILNEGLVSGTLETFESEEPYLCLFRNSCNTEKPEKCIRVRLQPSAQAGIFMRSARIVSLVRPEMLQMPVTLVDGTSERRELRSGALFQFASSLFTEHVEASTLEEIALGLENSEANTEKWLELHSSPGPLDLNSPSVLWERALIWGHPTHPFHRLCYAQEGLAPVEPRDLPEFLTPTLAFVSVLRDEISISGPFEESLQPLLAQLDVPAPETADRVVVPCLRLQLPCVFRHFPSAVLVKTVSGCADTQASMRTLTLRPELNFPYHIKLSIACQITSDVRAIRPCQTLGGQLVRKQLHEFFPPDLWWFKEVASVAGNQTAQGDTQENEDKARHIGCILREDLEARANANNEALIIAGSLAQQPANDPRTHAEIVFGLETVEQKHDWLKEYVAGFLRAVLPSLVQYGIGMEAHGQNALVRVCRDTRKITGFVVRDFEGIKVHVPTLEKLGINLCMTSPGCTKNLEDIWSKIHHSIFQNHLGNLVYALGLDRHDGWTIIRDELFAALKPDTDPRAKELYDFILQDTMPFKCFLRMRMSEHFNDYDGDEQDQPRVKRDERPLPNALLMGSARWEKVLNECAPKKLES</sequence>
<keyword id="KW-0436">Ligase</keyword>
<keyword id="KW-1185">Reference proteome</keyword>
<gene>
    <name evidence="2" type="primary">ankE</name>
    <name type="ORF">CDV56_108768</name>
</gene>
<proteinExistence type="evidence at protein level"/>
<reference key="1">
    <citation type="journal article" date="2019" name="Microbiol. Resour. Announc.">
        <title>Draft Genome Sequence of Azole-Resistant Aspergillus thermomutatus (Neosartorya pseudofischeri) Strain HMR-AF-39, Isolated from a Human Nasal Septum Abscess Aspirate.</title>
        <authorList>
            <person name="Parent-Michaud M."/>
            <person name="Dufresne P.J."/>
            <person name="Fournier E."/>
            <person name="Martineau C."/>
            <person name="Moreira S."/>
            <person name="Perkins V."/>
            <person name="de Repentigny L."/>
            <person name="Dufresne S.F."/>
        </authorList>
    </citation>
    <scope>NUCLEOTIDE SEQUENCE [LARGE SCALE GENOMIC DNA]</scope>
    <source>
        <strain>HMR-AF-39/LSPQ-01276</strain>
    </source>
</reference>
<reference key="2">
    <citation type="journal article" date="2023" name="Nat. Chem. Biol.">
        <title>Genome mining for unknown-unknown natural products.</title>
        <authorList>
            <person name="Yee D.A."/>
            <person name="Niwa K."/>
            <person name="Perlatti B."/>
            <person name="Chen M."/>
            <person name="Li Y."/>
            <person name="Tang Y."/>
        </authorList>
    </citation>
    <scope>FUNCTION</scope>
    <scope>CATALYTIC ACTIVITY</scope>
    <scope>PATHWAY</scope>
</reference>
<evidence type="ECO:0000269" key="1">
    <source>
    </source>
</evidence>
<evidence type="ECO:0000303" key="2">
    <source>
    </source>
</evidence>
<dbReference type="EC" id="6.-.-.-" evidence="1"/>
<dbReference type="EMBL" id="NKHU02000029">
    <property type="protein sequence ID" value="RHZ63459.1"/>
    <property type="molecule type" value="Genomic_DNA"/>
</dbReference>
<dbReference type="SMR" id="A0A397HK89"/>
<dbReference type="STRING" id="41047.A0A397HK89"/>
<dbReference type="VEuPathDB" id="FungiDB:CDV56_108768"/>
<dbReference type="OrthoDB" id="2117718at2759"/>
<dbReference type="Proteomes" id="UP000215305">
    <property type="component" value="Unassembled WGS sequence"/>
</dbReference>
<dbReference type="GO" id="GO:0016881">
    <property type="term" value="F:acid-amino acid ligase activity"/>
    <property type="evidence" value="ECO:0007669"/>
    <property type="project" value="UniProtKB-ARBA"/>
</dbReference>
<dbReference type="GO" id="GO:0019290">
    <property type="term" value="P:siderophore biosynthetic process"/>
    <property type="evidence" value="ECO:0007669"/>
    <property type="project" value="InterPro"/>
</dbReference>
<dbReference type="Gene3D" id="1.10.510.40">
    <property type="match status" value="1"/>
</dbReference>
<dbReference type="InterPro" id="IPR007310">
    <property type="entry name" value="Aerobactin_biosyn_IucA/IucC_N"/>
</dbReference>
<dbReference type="InterPro" id="IPR022770">
    <property type="entry name" value="IucA/IucC-like_C"/>
</dbReference>
<dbReference type="InterPro" id="IPR037455">
    <property type="entry name" value="LucA/IucC-like"/>
</dbReference>
<dbReference type="PANTHER" id="PTHR34384">
    <property type="entry name" value="L-2,3-DIAMINOPROPANOATE--CITRATE LIGASE"/>
    <property type="match status" value="1"/>
</dbReference>
<dbReference type="PANTHER" id="PTHR34384:SF5">
    <property type="entry name" value="L-2,3-DIAMINOPROPANOATE--CITRATE LIGASE"/>
    <property type="match status" value="1"/>
</dbReference>
<dbReference type="Pfam" id="PF06276">
    <property type="entry name" value="FhuF"/>
    <property type="match status" value="1"/>
</dbReference>
<dbReference type="Pfam" id="PF04183">
    <property type="entry name" value="IucA_IucC"/>
    <property type="match status" value="1"/>
</dbReference>
<organism>
    <name type="scientific">Aspergillus thermomutatus</name>
    <name type="common">Neosartorya pseudofischeri</name>
    <dbReference type="NCBI Taxonomy" id="41047"/>
    <lineage>
        <taxon>Eukaryota</taxon>
        <taxon>Fungi</taxon>
        <taxon>Dikarya</taxon>
        <taxon>Ascomycota</taxon>
        <taxon>Pezizomycotina</taxon>
        <taxon>Eurotiomycetes</taxon>
        <taxon>Eurotiomycetidae</taxon>
        <taxon>Eurotiales</taxon>
        <taxon>Aspergillaceae</taxon>
        <taxon>Aspergillus</taxon>
        <taxon>Aspergillus subgen. Fumigati</taxon>
    </lineage>
</organism>
<feature type="chain" id="PRO_0000460660" description="NRPS-independent siderophore synthetase-like protein ankE">
    <location>
        <begin position="1"/>
        <end position="604"/>
    </location>
</feature>
<comment type="function">
    <text evidence="1">NRPS-independent siderophore synthetase-like protein; part of the ank cluster that mediates the biosynthesis of NK13650 C, a highly modified cyclo-arginine-tyrosine dipeptide (PubMed:36702957). AnkE is responsible of the production of NK13650 B via ligation of citrate to the ankD product (PubMed:36702957). Within the pathway, the cyclodipeptide synthase ankA acts as the scaffold-generating enzyme and is responsible for formation of the cyclo-Arg-Tyr diketopiperazine (cRY) from L-Arg and L-Tyr. The ankA product cRY is desaturated by the cytochrome P450 monooxygenase ankB to yield a dehydro-cyclodipeptide intermediate. The FAD-dependent monooxygenase ankC then installs the m-OH, ankD catalyzes the attachment of L-homoserine, and ankE ligates citrate to the ankD product to yield NK13650 B. The O-methyltransferase ankF is responsible for methylation of the C-17 phenol group of NK13650 B to produce NK13650 D. Amidation of NK13650 D with L-Asp by ankG then leads to the production of NK13650 C, whereas amidation of NK13650 B produces NK13650 A (PubMed:36702957).</text>
</comment>
<comment type="catalytic activity">
    <reaction evidence="1">
        <text>cyclo(L-arginyl-(Z)-dehydro-4-O-homoseryl-tyrosyl) + citrate + ATP = NK13650 B + AMP + diphosphate + H(+)</text>
        <dbReference type="Rhea" id="RHEA:80255"/>
        <dbReference type="ChEBI" id="CHEBI:15378"/>
        <dbReference type="ChEBI" id="CHEBI:16947"/>
        <dbReference type="ChEBI" id="CHEBI:30616"/>
        <dbReference type="ChEBI" id="CHEBI:33019"/>
        <dbReference type="ChEBI" id="CHEBI:231316"/>
        <dbReference type="ChEBI" id="CHEBI:231317"/>
        <dbReference type="ChEBI" id="CHEBI:456215"/>
    </reaction>
    <physiologicalReaction direction="left-to-right" evidence="1">
        <dbReference type="Rhea" id="RHEA:80256"/>
    </physiologicalReaction>
</comment>
<comment type="pathway">
    <text evidence="1">Secondary metabolite biosynthesis.</text>
</comment>